<accession>Q0ZIW7</accession>
<reference key="1">
    <citation type="journal article" date="2006" name="BMC Evol. Biol.">
        <title>Phylogenetic analyses of Vitis (Vitaceae) based on complete chloroplast genome sequences: effects of taxon sampling and phylogenetic methods on resolving relationships among rosids.</title>
        <authorList>
            <person name="Jansen R.K."/>
            <person name="Kaittanis C."/>
            <person name="Lee S.-B."/>
            <person name="Saski C."/>
            <person name="Tomkins J."/>
            <person name="Alverson A.J."/>
            <person name="Daniell H."/>
        </authorList>
    </citation>
    <scope>NUCLEOTIDE SEQUENCE [LARGE SCALE GENOMIC DNA]</scope>
    <source>
        <strain>cv. Maxxa</strain>
    </source>
</reference>
<proteinExistence type="inferred from homology"/>
<gene>
    <name evidence="2" type="primary">psaC</name>
</gene>
<keyword id="KW-0004">4Fe-4S</keyword>
<keyword id="KW-0150">Chloroplast</keyword>
<keyword id="KW-0249">Electron transport</keyword>
<keyword id="KW-0408">Iron</keyword>
<keyword id="KW-0411">Iron-sulfur</keyword>
<keyword id="KW-0472">Membrane</keyword>
<keyword id="KW-0479">Metal-binding</keyword>
<keyword id="KW-0560">Oxidoreductase</keyword>
<keyword id="KW-0602">Photosynthesis</keyword>
<keyword id="KW-0603">Photosystem I</keyword>
<keyword id="KW-0934">Plastid</keyword>
<keyword id="KW-1185">Reference proteome</keyword>
<keyword id="KW-0677">Repeat</keyword>
<keyword id="KW-0793">Thylakoid</keyword>
<keyword id="KW-0813">Transport</keyword>
<geneLocation type="chloroplast"/>
<name>PSAC_VITVI</name>
<dbReference type="EC" id="1.97.1.12" evidence="2"/>
<dbReference type="EMBL" id="DQ424856">
    <property type="protein sequence ID" value="ABE47586.1"/>
    <property type="molecule type" value="Genomic_DNA"/>
</dbReference>
<dbReference type="RefSeq" id="YP_002608376.1">
    <property type="nucleotide sequence ID" value="NC_012119.1"/>
</dbReference>
<dbReference type="RefSeq" id="YP_567129.1">
    <property type="nucleotide sequence ID" value="NC_007957.1"/>
</dbReference>
<dbReference type="SMR" id="Q0ZIW7"/>
<dbReference type="FunCoup" id="Q0ZIW7">
    <property type="interactions" value="236"/>
</dbReference>
<dbReference type="STRING" id="29760.Q0ZIW7"/>
<dbReference type="PaxDb" id="29760-VIT_00s0246g00200.t01"/>
<dbReference type="GeneID" id="4025040"/>
<dbReference type="GeneID" id="7498557"/>
<dbReference type="KEGG" id="vvi:4025040"/>
<dbReference type="KEGG" id="vvi:7498557"/>
<dbReference type="eggNOG" id="ENOG502S26M">
    <property type="taxonomic scope" value="Eukaryota"/>
</dbReference>
<dbReference type="InParanoid" id="Q0ZIW7"/>
<dbReference type="OrthoDB" id="652388at71240"/>
<dbReference type="Proteomes" id="UP000009183">
    <property type="component" value="Chloroplast"/>
</dbReference>
<dbReference type="ExpressionAtlas" id="Q0ZIW7">
    <property type="expression patterns" value="baseline and differential"/>
</dbReference>
<dbReference type="GO" id="GO:0009535">
    <property type="term" value="C:chloroplast thylakoid membrane"/>
    <property type="evidence" value="ECO:0007669"/>
    <property type="project" value="UniProtKB-SubCell"/>
</dbReference>
<dbReference type="GO" id="GO:0009522">
    <property type="term" value="C:photosystem I"/>
    <property type="evidence" value="ECO:0007669"/>
    <property type="project" value="UniProtKB-KW"/>
</dbReference>
<dbReference type="GO" id="GO:0051539">
    <property type="term" value="F:4 iron, 4 sulfur cluster binding"/>
    <property type="evidence" value="ECO:0007669"/>
    <property type="project" value="UniProtKB-KW"/>
</dbReference>
<dbReference type="GO" id="GO:0009055">
    <property type="term" value="F:electron transfer activity"/>
    <property type="evidence" value="ECO:0007669"/>
    <property type="project" value="UniProtKB-UniRule"/>
</dbReference>
<dbReference type="GO" id="GO:0046872">
    <property type="term" value="F:metal ion binding"/>
    <property type="evidence" value="ECO:0007669"/>
    <property type="project" value="UniProtKB-KW"/>
</dbReference>
<dbReference type="GO" id="GO:0016491">
    <property type="term" value="F:oxidoreductase activity"/>
    <property type="evidence" value="ECO:0007669"/>
    <property type="project" value="UniProtKB-KW"/>
</dbReference>
<dbReference type="GO" id="GO:0015979">
    <property type="term" value="P:photosynthesis"/>
    <property type="evidence" value="ECO:0000318"/>
    <property type="project" value="GO_Central"/>
</dbReference>
<dbReference type="GO" id="GO:0009773">
    <property type="term" value="P:photosynthetic electron transport in photosystem I"/>
    <property type="evidence" value="ECO:0007669"/>
    <property type="project" value="InterPro"/>
</dbReference>
<dbReference type="FunFam" id="3.30.70.20:FF:000001">
    <property type="entry name" value="Photosystem I iron-sulfur center"/>
    <property type="match status" value="1"/>
</dbReference>
<dbReference type="Gene3D" id="3.30.70.20">
    <property type="match status" value="1"/>
</dbReference>
<dbReference type="HAMAP" id="MF_01303">
    <property type="entry name" value="PSI_PsaC"/>
    <property type="match status" value="1"/>
</dbReference>
<dbReference type="InterPro" id="IPR017896">
    <property type="entry name" value="4Fe4S_Fe-S-bd"/>
</dbReference>
<dbReference type="InterPro" id="IPR017900">
    <property type="entry name" value="4Fe4S_Fe_S_CS"/>
</dbReference>
<dbReference type="InterPro" id="IPR050157">
    <property type="entry name" value="PSI_iron-sulfur_center"/>
</dbReference>
<dbReference type="InterPro" id="IPR017491">
    <property type="entry name" value="PSI_PsaC"/>
</dbReference>
<dbReference type="NCBIfam" id="TIGR03048">
    <property type="entry name" value="PS_I_psaC"/>
    <property type="match status" value="1"/>
</dbReference>
<dbReference type="PANTHER" id="PTHR24960:SF79">
    <property type="entry name" value="PHOTOSYSTEM I IRON-SULFUR CENTER"/>
    <property type="match status" value="1"/>
</dbReference>
<dbReference type="PANTHER" id="PTHR24960">
    <property type="entry name" value="PHOTOSYSTEM I IRON-SULFUR CENTER-RELATED"/>
    <property type="match status" value="1"/>
</dbReference>
<dbReference type="Pfam" id="PF14697">
    <property type="entry name" value="Fer4_21"/>
    <property type="match status" value="1"/>
</dbReference>
<dbReference type="SUPFAM" id="SSF54862">
    <property type="entry name" value="4Fe-4S ferredoxins"/>
    <property type="match status" value="1"/>
</dbReference>
<dbReference type="PROSITE" id="PS00198">
    <property type="entry name" value="4FE4S_FER_1"/>
    <property type="match status" value="2"/>
</dbReference>
<dbReference type="PROSITE" id="PS51379">
    <property type="entry name" value="4FE4S_FER_2"/>
    <property type="match status" value="2"/>
</dbReference>
<organism>
    <name type="scientific">Vitis vinifera</name>
    <name type="common">Grape</name>
    <dbReference type="NCBI Taxonomy" id="29760"/>
    <lineage>
        <taxon>Eukaryota</taxon>
        <taxon>Viridiplantae</taxon>
        <taxon>Streptophyta</taxon>
        <taxon>Embryophyta</taxon>
        <taxon>Tracheophyta</taxon>
        <taxon>Spermatophyta</taxon>
        <taxon>Magnoliopsida</taxon>
        <taxon>eudicotyledons</taxon>
        <taxon>Gunneridae</taxon>
        <taxon>Pentapetalae</taxon>
        <taxon>rosids</taxon>
        <taxon>Vitales</taxon>
        <taxon>Vitaceae</taxon>
        <taxon>Viteae</taxon>
        <taxon>Vitis</taxon>
    </lineage>
</organism>
<comment type="function">
    <text evidence="2">Apoprotein for the two 4Fe-4S centers FA and FB of photosystem I (PSI); essential for photochemical activity. FB is the terminal electron acceptor of PSI, donating electrons to ferredoxin. The C-terminus interacts with PsaA/B/D and helps assemble the protein into the PSI complex. Required for binding of PsaD and PsaE to PSI. PSI is a plastocyanin-ferredoxin oxidoreductase, converting photonic excitation into a charge separation, which transfers an electron from the donor P700 chlorophyll pair to the spectroscopically characterized acceptors A0, A1, FX, FA and FB in turn.</text>
</comment>
<comment type="catalytic activity">
    <reaction evidence="2">
        <text>reduced [plastocyanin] + hnu + oxidized [2Fe-2S]-[ferredoxin] = oxidized [plastocyanin] + reduced [2Fe-2S]-[ferredoxin]</text>
        <dbReference type="Rhea" id="RHEA:30407"/>
        <dbReference type="Rhea" id="RHEA-COMP:10000"/>
        <dbReference type="Rhea" id="RHEA-COMP:10001"/>
        <dbReference type="Rhea" id="RHEA-COMP:10039"/>
        <dbReference type="Rhea" id="RHEA-COMP:10040"/>
        <dbReference type="ChEBI" id="CHEBI:29036"/>
        <dbReference type="ChEBI" id="CHEBI:30212"/>
        <dbReference type="ChEBI" id="CHEBI:33737"/>
        <dbReference type="ChEBI" id="CHEBI:33738"/>
        <dbReference type="ChEBI" id="CHEBI:49552"/>
        <dbReference type="EC" id="1.97.1.12"/>
    </reaction>
</comment>
<comment type="cofactor">
    <cofactor evidence="2">
        <name>[4Fe-4S] cluster</name>
        <dbReference type="ChEBI" id="CHEBI:49883"/>
    </cofactor>
    <text evidence="2">Binds 2 [4Fe-4S] clusters. Cluster 2 is most probably the spectroscopically characterized electron acceptor FA and cluster 1 is most probably FB.</text>
</comment>
<comment type="subunit">
    <text evidence="2">The eukaryotic PSI reaction center is composed of at least 11 subunits.</text>
</comment>
<comment type="subcellular location">
    <subcellularLocation>
        <location evidence="2">Plastid</location>
        <location evidence="2">Chloroplast thylakoid membrane</location>
        <topology evidence="2">Peripheral membrane protein</topology>
        <orientation evidence="2">Stromal side</orientation>
    </subcellularLocation>
</comment>
<sequence>MSHSVKIYDTCIGCTQCVRACPTDVLEMIPWDGCKAKQIASAPRTEDCVGCKRCESACPTDFLSVRVYLWHETTRSMGLAY</sequence>
<evidence type="ECO:0000250" key="1"/>
<evidence type="ECO:0000255" key="2">
    <source>
        <dbReference type="HAMAP-Rule" id="MF_01303"/>
    </source>
</evidence>
<protein>
    <recommendedName>
        <fullName evidence="2">Photosystem I iron-sulfur center</fullName>
        <ecNumber evidence="2">1.97.1.12</ecNumber>
    </recommendedName>
    <alternativeName>
        <fullName evidence="2">9 kDa polypeptide</fullName>
    </alternativeName>
    <alternativeName>
        <fullName evidence="2">PSI-C</fullName>
    </alternativeName>
    <alternativeName>
        <fullName evidence="2">Photosystem I subunit VII</fullName>
    </alternativeName>
    <alternativeName>
        <fullName evidence="2">PsaC</fullName>
    </alternativeName>
</protein>
<feature type="initiator methionine" description="Removed" evidence="1">
    <location>
        <position position="1"/>
    </location>
</feature>
<feature type="chain" id="PRO_0000276005" description="Photosystem I iron-sulfur center">
    <location>
        <begin position="2"/>
        <end position="81"/>
    </location>
</feature>
<feature type="domain" description="4Fe-4S ferredoxin-type 1" evidence="2">
    <location>
        <begin position="2"/>
        <end position="31"/>
    </location>
</feature>
<feature type="domain" description="4Fe-4S ferredoxin-type 2" evidence="2">
    <location>
        <begin position="39"/>
        <end position="68"/>
    </location>
</feature>
<feature type="binding site" evidence="2">
    <location>
        <position position="11"/>
    </location>
    <ligand>
        <name>[4Fe-4S] cluster</name>
        <dbReference type="ChEBI" id="CHEBI:49883"/>
        <label>1</label>
    </ligand>
</feature>
<feature type="binding site" evidence="2">
    <location>
        <position position="14"/>
    </location>
    <ligand>
        <name>[4Fe-4S] cluster</name>
        <dbReference type="ChEBI" id="CHEBI:49883"/>
        <label>1</label>
    </ligand>
</feature>
<feature type="binding site" evidence="2">
    <location>
        <position position="17"/>
    </location>
    <ligand>
        <name>[4Fe-4S] cluster</name>
        <dbReference type="ChEBI" id="CHEBI:49883"/>
        <label>1</label>
    </ligand>
</feature>
<feature type="binding site" evidence="2">
    <location>
        <position position="21"/>
    </location>
    <ligand>
        <name>[4Fe-4S] cluster</name>
        <dbReference type="ChEBI" id="CHEBI:49883"/>
        <label>2</label>
    </ligand>
</feature>
<feature type="binding site" evidence="2">
    <location>
        <position position="48"/>
    </location>
    <ligand>
        <name>[4Fe-4S] cluster</name>
        <dbReference type="ChEBI" id="CHEBI:49883"/>
        <label>2</label>
    </ligand>
</feature>
<feature type="binding site" evidence="2">
    <location>
        <position position="51"/>
    </location>
    <ligand>
        <name>[4Fe-4S] cluster</name>
        <dbReference type="ChEBI" id="CHEBI:49883"/>
        <label>2</label>
    </ligand>
</feature>
<feature type="binding site" evidence="2">
    <location>
        <position position="54"/>
    </location>
    <ligand>
        <name>[4Fe-4S] cluster</name>
        <dbReference type="ChEBI" id="CHEBI:49883"/>
        <label>2</label>
    </ligand>
</feature>
<feature type="binding site" evidence="2">
    <location>
        <position position="58"/>
    </location>
    <ligand>
        <name>[4Fe-4S] cluster</name>
        <dbReference type="ChEBI" id="CHEBI:49883"/>
        <label>1</label>
    </ligand>
</feature>